<reference key="1">
    <citation type="journal article" date="2003" name="Proc. Natl. Acad. Sci. U.S.A.">
        <title>A molecular approach to comparative phylogeography of extant Malagasy lemurs.</title>
        <authorList>
            <person name="Pastorini J."/>
            <person name="Thalmann U."/>
            <person name="Martin R.D."/>
        </authorList>
    </citation>
    <scope>NUCLEOTIDE SEQUENCE [GENOMIC DNA]</scope>
</reference>
<evidence type="ECO:0000250" key="1">
    <source>
        <dbReference type="UniProtKB" id="P03901"/>
    </source>
</evidence>
<evidence type="ECO:0000250" key="2">
    <source>
        <dbReference type="UniProtKB" id="P03902"/>
    </source>
</evidence>
<evidence type="ECO:0000255" key="3"/>
<evidence type="ECO:0000305" key="4"/>
<name>NU4LM_VARRB</name>
<comment type="function">
    <text evidence="1">Core subunit of the mitochondrial membrane respiratory chain NADH dehydrogenase (Complex I) which catalyzes electron transfer from NADH through the respiratory chain, using ubiquinone as an electron acceptor. Part of the enzyme membrane arm which is embedded in the lipid bilayer and involved in proton translocation.</text>
</comment>
<comment type="catalytic activity">
    <reaction evidence="1">
        <text>a ubiquinone + NADH + 5 H(+)(in) = a ubiquinol + NAD(+) + 4 H(+)(out)</text>
        <dbReference type="Rhea" id="RHEA:29091"/>
        <dbReference type="Rhea" id="RHEA-COMP:9565"/>
        <dbReference type="Rhea" id="RHEA-COMP:9566"/>
        <dbReference type="ChEBI" id="CHEBI:15378"/>
        <dbReference type="ChEBI" id="CHEBI:16389"/>
        <dbReference type="ChEBI" id="CHEBI:17976"/>
        <dbReference type="ChEBI" id="CHEBI:57540"/>
        <dbReference type="ChEBI" id="CHEBI:57945"/>
        <dbReference type="EC" id="7.1.1.2"/>
    </reaction>
    <physiologicalReaction direction="left-to-right" evidence="1">
        <dbReference type="Rhea" id="RHEA:29092"/>
    </physiologicalReaction>
</comment>
<comment type="subunit">
    <text evidence="2">Core subunit of respiratory chain NADH dehydrogenase (Complex I) which is composed of 45 different subunits.</text>
</comment>
<comment type="subcellular location">
    <subcellularLocation>
        <location evidence="2">Mitochondrion inner membrane</location>
        <topology evidence="3">Multi-pass membrane protein</topology>
    </subcellularLocation>
</comment>
<comment type="similarity">
    <text evidence="4">Belongs to the complex I subunit 4L family.</text>
</comment>
<protein>
    <recommendedName>
        <fullName>NADH-ubiquinone oxidoreductase chain 4L</fullName>
        <ecNumber>7.1.1.2</ecNumber>
    </recommendedName>
    <alternativeName>
        <fullName>NADH dehydrogenase subunit 4L</fullName>
    </alternativeName>
</protein>
<organism>
    <name type="scientific">Varecia rubra</name>
    <name type="common">Red ruffed lemur</name>
    <name type="synonym">Varecia variegata rubra</name>
    <dbReference type="NCBI Taxonomy" id="554167"/>
    <lineage>
        <taxon>Eukaryota</taxon>
        <taxon>Metazoa</taxon>
        <taxon>Chordata</taxon>
        <taxon>Craniata</taxon>
        <taxon>Vertebrata</taxon>
        <taxon>Euteleostomi</taxon>
        <taxon>Mammalia</taxon>
        <taxon>Eutheria</taxon>
        <taxon>Euarchontoglires</taxon>
        <taxon>Primates</taxon>
        <taxon>Strepsirrhini</taxon>
        <taxon>Lemuriformes</taxon>
        <taxon>Lemuridae</taxon>
        <taxon>Varecia</taxon>
    </lineage>
</organism>
<proteinExistence type="inferred from homology"/>
<geneLocation type="mitochondrion"/>
<feature type="chain" id="PRO_0000275147" description="NADH-ubiquinone oxidoreductase chain 4L">
    <location>
        <begin position="1"/>
        <end position="98"/>
    </location>
</feature>
<feature type="transmembrane region" description="Helical" evidence="3">
    <location>
        <begin position="2"/>
        <end position="22"/>
    </location>
</feature>
<feature type="transmembrane region" description="Helical" evidence="3">
    <location>
        <begin position="37"/>
        <end position="57"/>
    </location>
</feature>
<feature type="transmembrane region" description="Helical" evidence="3">
    <location>
        <begin position="61"/>
        <end position="81"/>
    </location>
</feature>
<keyword id="KW-0249">Electron transport</keyword>
<keyword id="KW-0472">Membrane</keyword>
<keyword id="KW-0496">Mitochondrion</keyword>
<keyword id="KW-0999">Mitochondrion inner membrane</keyword>
<keyword id="KW-0520">NAD</keyword>
<keyword id="KW-0679">Respiratory chain</keyword>
<keyword id="KW-1278">Translocase</keyword>
<keyword id="KW-0812">Transmembrane</keyword>
<keyword id="KW-1133">Transmembrane helix</keyword>
<keyword id="KW-0813">Transport</keyword>
<keyword id="KW-0830">Ubiquinone</keyword>
<accession>Q8HBG2</accession>
<gene>
    <name type="primary">MT-ND4L</name>
    <name type="synonym">MTND4L</name>
    <name type="synonym">NADH4L</name>
    <name type="synonym">ND4L</name>
</gene>
<sequence>MPSIFINIILAFIIALLGMLIFRSHLMSSLLCLESMMLSMFILSTLTILSLHLTMSFMMPILLLVFAACEAAVGLALLVTVSNTYGLDYIQNLNLLQC</sequence>
<dbReference type="EC" id="7.1.1.2"/>
<dbReference type="EMBL" id="AF224588">
    <property type="protein sequence ID" value="AAN64803.1"/>
    <property type="molecule type" value="Genomic_DNA"/>
</dbReference>
<dbReference type="EMBL" id="AF224589">
    <property type="protein sequence ID" value="AAN64807.1"/>
    <property type="molecule type" value="Genomic_DNA"/>
</dbReference>
<dbReference type="EMBL" id="AF224590">
    <property type="protein sequence ID" value="AAN64811.1"/>
    <property type="molecule type" value="Genomic_DNA"/>
</dbReference>
<dbReference type="EMBL" id="AF224591">
    <property type="protein sequence ID" value="AAN64815.1"/>
    <property type="molecule type" value="Genomic_DNA"/>
</dbReference>
<dbReference type="EMBL" id="AF224592">
    <property type="protein sequence ID" value="AAN64819.1"/>
    <property type="molecule type" value="Genomic_DNA"/>
</dbReference>
<dbReference type="SMR" id="Q8HBG2"/>
<dbReference type="GO" id="GO:0005743">
    <property type="term" value="C:mitochondrial inner membrane"/>
    <property type="evidence" value="ECO:0000250"/>
    <property type="project" value="UniProtKB"/>
</dbReference>
<dbReference type="GO" id="GO:0045271">
    <property type="term" value="C:respiratory chain complex I"/>
    <property type="evidence" value="ECO:0000250"/>
    <property type="project" value="UniProtKB"/>
</dbReference>
<dbReference type="GO" id="GO:0008137">
    <property type="term" value="F:NADH dehydrogenase (ubiquinone) activity"/>
    <property type="evidence" value="ECO:0000250"/>
    <property type="project" value="UniProtKB"/>
</dbReference>
<dbReference type="GO" id="GO:0042773">
    <property type="term" value="P:ATP synthesis coupled electron transport"/>
    <property type="evidence" value="ECO:0007669"/>
    <property type="project" value="InterPro"/>
</dbReference>
<dbReference type="FunFam" id="1.10.287.3510:FF:000002">
    <property type="entry name" value="NADH-ubiquinone oxidoreductase chain 4L"/>
    <property type="match status" value="1"/>
</dbReference>
<dbReference type="Gene3D" id="1.10.287.3510">
    <property type="match status" value="1"/>
</dbReference>
<dbReference type="InterPro" id="IPR001133">
    <property type="entry name" value="NADH_UbQ_OxRdtase_chain4L/K"/>
</dbReference>
<dbReference type="InterPro" id="IPR039428">
    <property type="entry name" value="NUOK/Mnh_C1-like"/>
</dbReference>
<dbReference type="PANTHER" id="PTHR11434:SF0">
    <property type="entry name" value="NADH-UBIQUINONE OXIDOREDUCTASE CHAIN 4L"/>
    <property type="match status" value="1"/>
</dbReference>
<dbReference type="PANTHER" id="PTHR11434">
    <property type="entry name" value="NADH-UBIQUINONE OXIDOREDUCTASE SUBUNIT ND4L"/>
    <property type="match status" value="1"/>
</dbReference>
<dbReference type="Pfam" id="PF00420">
    <property type="entry name" value="Oxidored_q2"/>
    <property type="match status" value="1"/>
</dbReference>